<feature type="signal peptide" evidence="1">
    <location>
        <begin position="1"/>
        <end position="23"/>
    </location>
</feature>
<feature type="chain" id="PRO_0000268662" description="Interleukin-23 receptor">
    <location>
        <begin position="24"/>
        <end position="629"/>
    </location>
</feature>
<feature type="topological domain" description="Extracellular" evidence="1">
    <location>
        <begin position="24"/>
        <end position="355"/>
    </location>
</feature>
<feature type="transmembrane region" description="Helical" evidence="1">
    <location>
        <begin position="356"/>
        <end position="376"/>
    </location>
</feature>
<feature type="topological domain" description="Cytoplasmic" evidence="1">
    <location>
        <begin position="377"/>
        <end position="629"/>
    </location>
</feature>
<feature type="domain" description="Fibronectin type-III 1" evidence="2">
    <location>
        <begin position="127"/>
        <end position="217"/>
    </location>
</feature>
<feature type="domain" description="Fibronectin type-III 2" evidence="2">
    <location>
        <begin position="219"/>
        <end position="318"/>
    </location>
</feature>
<feature type="glycosylation site" description="N-linked (GlcNAc...) asparagine; partial" evidence="10">
    <location>
        <position position="29"/>
    </location>
</feature>
<feature type="glycosylation site" description="N-linked (GlcNAc...) asparagine" evidence="10">
    <location>
        <position position="47"/>
    </location>
</feature>
<feature type="glycosylation site" description="N-linked (GlcNAc...) asparagine" evidence="10">
    <location>
        <position position="81"/>
    </location>
</feature>
<feature type="glycosylation site" description="N-linked (GlcNAc...) asparagine" evidence="10">
    <location>
        <position position="141"/>
    </location>
</feature>
<feature type="glycosylation site" description="N-linked (GlcNAc...) (high mannose) asparagine" evidence="10">
    <location>
        <position position="180"/>
    </location>
</feature>
<feature type="glycosylation site" description="N-linked (GlcNAc...) asparagine" evidence="10">
    <location>
        <position position="232"/>
    </location>
</feature>
<feature type="glycosylation site" description="N-linked (GlcNAc...) asparagine" evidence="10">
    <location>
        <position position="262"/>
    </location>
</feature>
<feature type="glycosylation site" description="N-linked (GlcNAc...) asparagine; partial" evidence="10">
    <location>
        <position position="273"/>
    </location>
</feature>
<feature type="splice variant" id="VSP_021990" description="In isoform 7." evidence="11">
    <location>
        <begin position="1"/>
        <end position="402"/>
    </location>
</feature>
<feature type="splice variant" id="VSP_021991" description="In isoform 5." evidence="12">
    <location>
        <begin position="1"/>
        <end position="365"/>
    </location>
</feature>
<feature type="splice variant" id="VSP_021992" description="In isoform 6." evidence="11">
    <location>
        <begin position="1"/>
        <end position="255"/>
    </location>
</feature>
<feature type="splice variant" id="VSP_021993" description="In isoform 2." evidence="12">
    <location>
        <begin position="1"/>
        <end position="254"/>
    </location>
</feature>
<feature type="splice variant" id="VSP_021994" description="In isoform 4." evidence="12">
    <original>LETEEEQQYL</original>
    <variation>DTFCSRHFQG</variation>
    <location>
        <begin position="165"/>
        <end position="174"/>
    </location>
</feature>
<feature type="splice variant" id="VSP_021995" description="In isoform 4." evidence="12">
    <location>
        <begin position="175"/>
        <end position="629"/>
    </location>
</feature>
<feature type="splice variant" id="VSP_021996" description="In isoform 6." evidence="11">
    <original>RYKATTNQTWN</original>
    <variation>MILRPYQPCGT</variation>
    <location>
        <begin position="256"/>
        <end position="266"/>
    </location>
</feature>
<feature type="splice variant" id="VSP_021997" description="In isoform 3." evidence="12">
    <original>DNRGDIGL</original>
    <variation>GLKEGSYC</variation>
    <location>
        <begin position="349"/>
        <end position="356"/>
    </location>
</feature>
<feature type="splice variant" id="VSP_021998" description="In isoform 3." evidence="12">
    <location>
        <begin position="357"/>
        <end position="629"/>
    </location>
</feature>
<feature type="splice variant" id="VSP_021999" description="In isoform 5." evidence="12">
    <original>MLSILSLIGIFNRSFRTG</original>
    <variation>MEFWANSCFHLYRAPYFW</variation>
    <location>
        <begin position="366"/>
        <end position="383"/>
    </location>
</feature>
<feature type="sequence variant" id="VAR_029752" description="In dbSNP:rs1884444." evidence="6">
    <original>Q</original>
    <variation>H</variation>
    <location>
        <position position="3"/>
    </location>
</feature>
<feature type="sequence variant" id="VAR_047955" description="In dbSNP:rs11465797.">
    <original>T</original>
    <variation>N</variation>
    <location>
        <position position="175"/>
    </location>
</feature>
<feature type="sequence variant" id="VAR_029753" description="In dbSNP:rs7530511." evidence="3 4 5 6 9">
    <original>L</original>
    <variation>P</variation>
    <location>
        <position position="310"/>
    </location>
</feature>
<feature type="sequence variant" id="VAR_029754" description="Protective factor against IBD17; protective factor against psoriasis; dbSNP:rs11209026." evidence="6 7 8 9">
    <original>R</original>
    <variation>Q</variation>
    <location>
        <position position="381"/>
    </location>
</feature>
<feature type="sequence conflict" description="In Ref. 2; AAY18346." evidence="13" ref="2">
    <original>M</original>
    <variation>T</variation>
    <location>
        <position position="46"/>
    </location>
</feature>
<feature type="sequence conflict" description="In Ref. 2; AAY18348." evidence="13" ref="2">
    <original>C</original>
    <variation>R</variation>
    <location>
        <position position="133"/>
    </location>
</feature>
<feature type="sequence conflict" description="In Ref. 2; AAY18348." evidence="13" ref="2">
    <original>R</original>
    <variation>G</variation>
    <location>
        <position position="302"/>
    </location>
</feature>
<feature type="sequence conflict" description="In Ref. 2; AAY18347." evidence="13" ref="2">
    <original>V</original>
    <variation>A</variation>
    <location>
        <position position="475"/>
    </location>
</feature>
<feature type="sequence conflict" description="In Ref. 2; AAY18347." evidence="13" ref="2">
    <original>N</original>
    <variation>D</variation>
    <location>
        <position position="481"/>
    </location>
</feature>
<feature type="sequence conflict" description="In Ref. 2; AAY18349." evidence="13" ref="2">
    <original>S</original>
    <variation>R</variation>
    <location>
        <position position="581"/>
    </location>
</feature>
<feature type="strand" evidence="14">
    <location>
        <begin position="31"/>
        <end position="38"/>
    </location>
</feature>
<feature type="strand" evidence="14">
    <location>
        <begin position="40"/>
        <end position="43"/>
    </location>
</feature>
<feature type="strand" evidence="14">
    <location>
        <begin position="48"/>
        <end position="54"/>
    </location>
</feature>
<feature type="strand" evidence="14">
    <location>
        <begin position="64"/>
        <end position="68"/>
    </location>
</feature>
<feature type="strand" evidence="14">
    <location>
        <begin position="75"/>
        <end position="81"/>
    </location>
</feature>
<feature type="strand" evidence="14">
    <location>
        <begin position="84"/>
        <end position="91"/>
    </location>
</feature>
<feature type="strand" evidence="14">
    <location>
        <begin position="95"/>
        <end position="104"/>
    </location>
</feature>
<feature type="strand" evidence="14">
    <location>
        <begin position="109"/>
        <end position="122"/>
    </location>
</feature>
<feature type="strand" evidence="14">
    <location>
        <begin position="129"/>
        <end position="136"/>
    </location>
</feature>
<feature type="helix" evidence="15">
    <location>
        <begin position="137"/>
        <end position="139"/>
    </location>
</feature>
<feature type="strand" evidence="14">
    <location>
        <begin position="141"/>
        <end position="147"/>
    </location>
</feature>
<feature type="strand" evidence="14">
    <location>
        <begin position="157"/>
        <end position="164"/>
    </location>
</feature>
<feature type="turn" evidence="14">
    <location>
        <begin position="165"/>
        <end position="167"/>
    </location>
</feature>
<feature type="strand" evidence="14">
    <location>
        <begin position="170"/>
        <end position="177"/>
    </location>
</feature>
<feature type="strand" evidence="14">
    <location>
        <begin position="179"/>
        <end position="182"/>
    </location>
</feature>
<feature type="helix" evidence="14">
    <location>
        <begin position="183"/>
        <end position="185"/>
    </location>
</feature>
<feature type="strand" evidence="14">
    <location>
        <begin position="190"/>
        <end position="200"/>
    </location>
</feature>
<feature type="strand" evidence="14">
    <location>
        <begin position="203"/>
        <end position="206"/>
    </location>
</feature>
<feature type="strand" evidence="14">
    <location>
        <begin position="210"/>
        <end position="213"/>
    </location>
</feature>
<feature type="turn" evidence="14">
    <location>
        <begin position="214"/>
        <end position="216"/>
    </location>
</feature>
<feature type="strand" evidence="14">
    <location>
        <begin position="217"/>
        <end position="219"/>
    </location>
</feature>
<feature type="strand" evidence="14">
    <location>
        <begin position="223"/>
        <end position="230"/>
    </location>
</feature>
<feature type="strand" evidence="14">
    <location>
        <begin position="233"/>
        <end position="235"/>
    </location>
</feature>
<feature type="strand" evidence="14">
    <location>
        <begin position="237"/>
        <end position="244"/>
    </location>
</feature>
<feature type="strand" evidence="14">
    <location>
        <begin position="249"/>
        <end position="259"/>
    </location>
</feature>
<feature type="strand" evidence="14">
    <location>
        <begin position="266"/>
        <end position="270"/>
    </location>
</feature>
<feature type="strand" evidence="14">
    <location>
        <begin position="278"/>
        <end position="283"/>
    </location>
</feature>
<feature type="strand" evidence="14">
    <location>
        <begin position="290"/>
        <end position="298"/>
    </location>
</feature>
<proteinExistence type="evidence at protein level"/>
<evidence type="ECO:0000255" key="1"/>
<evidence type="ECO:0000255" key="2">
    <source>
        <dbReference type="PROSITE-ProRule" id="PRU00316"/>
    </source>
</evidence>
<evidence type="ECO:0000269" key="3">
    <source>
    </source>
</evidence>
<evidence type="ECO:0000269" key="4">
    <source>
    </source>
</evidence>
<evidence type="ECO:0000269" key="5">
    <source>
    </source>
</evidence>
<evidence type="ECO:0000269" key="6">
    <source>
    </source>
</evidence>
<evidence type="ECO:0000269" key="7">
    <source>
    </source>
</evidence>
<evidence type="ECO:0000269" key="8">
    <source>
    </source>
</evidence>
<evidence type="ECO:0000269" key="9">
    <source>
    </source>
</evidence>
<evidence type="ECO:0000269" key="10">
    <source>
    </source>
</evidence>
<evidence type="ECO:0000303" key="11">
    <source>
    </source>
</evidence>
<evidence type="ECO:0000303" key="12">
    <source>
    </source>
</evidence>
<evidence type="ECO:0000305" key="13"/>
<evidence type="ECO:0007829" key="14">
    <source>
        <dbReference type="PDB" id="5MZV"/>
    </source>
</evidence>
<evidence type="ECO:0007829" key="15">
    <source>
        <dbReference type="PDB" id="6WDQ"/>
    </source>
</evidence>
<reference key="1">
    <citation type="journal article" date="2002" name="J. Immunol.">
        <title>A receptor for the heterodimeric cytokine IL-23 is composed of IL-12Rbeta1 and a novel cytokine receptor subunit, IL-23R.</title>
        <authorList>
            <person name="Parham C."/>
            <person name="Chirica M."/>
            <person name="Timans J."/>
            <person name="Vaisberg E."/>
            <person name="Travis M."/>
            <person name="Cheung J."/>
            <person name="Pflanz S."/>
            <person name="Zhang R."/>
            <person name="Singh K.P."/>
            <person name="Vega F."/>
            <person name="To W."/>
            <person name="Wagner J."/>
            <person name="O'Farrell A.-M."/>
            <person name="McClanahan T.K."/>
            <person name="Zurawski S."/>
            <person name="Hannum C."/>
            <person name="Gorman D."/>
            <person name="Rennick D.M."/>
            <person name="Kastelein R.A."/>
            <person name="de Waal Malefyt R."/>
            <person name="Moore K.W."/>
        </authorList>
    </citation>
    <scope>NUCLEOTIDE SEQUENCE [MRNA] (ISOFORM 1)</scope>
    <scope>FUNCTION</scope>
    <scope>INTERACTION WITH IL23; IL12RB1; JAK2 AND STAT3</scope>
    <scope>PHOSPHORYLATION</scope>
    <scope>TISSUE SPECIFICITY</scope>
    <scope>SUBCELLULAR LOCATION</scope>
    <scope>VARIANT PRO-310</scope>
    <source>
        <tissue>Natural killer cell</tissue>
        <tissue>T-cell</tissue>
    </source>
</reference>
<reference key="2">
    <citation type="journal article" date="2006" name="Immunogenetics">
        <title>Identification and expression analysis of alternatively spliced isoforms of human interleukin-23 receptor gene in normal lymphoid cells and selected tumor cells.</title>
        <authorList>
            <person name="Zhang X.-Y."/>
            <person name="Zhang H.-J."/>
            <person name="Zhang Y."/>
            <person name="Fu Y.-J."/>
            <person name="He J."/>
            <person name="Zhu L.-P."/>
            <person name="Wang S.-H."/>
            <person name="Liu L."/>
        </authorList>
    </citation>
    <scope>NUCLEOTIDE SEQUENCE [MRNA] (ISOFORMS 2 AND 5)</scope>
    <scope>NUCLEOTIDE SEQUENCE [MRNA] OF 37-629 (ISOFORMS 1; 3 AND 4)</scope>
    <scope>TISSUE SPECIFICITY</scope>
    <scope>VARIANT PRO-310</scope>
    <source>
        <tissue>Bone marrow</tissue>
    </source>
</reference>
<reference key="3">
    <citation type="journal article" date="2006" name="Nature">
        <title>The DNA sequence and biological annotation of human chromosome 1.</title>
        <authorList>
            <person name="Gregory S.G."/>
            <person name="Barlow K.F."/>
            <person name="McLay K.E."/>
            <person name="Kaul R."/>
            <person name="Swarbreck D."/>
            <person name="Dunham A."/>
            <person name="Scott C.E."/>
            <person name="Howe K.L."/>
            <person name="Woodfine K."/>
            <person name="Spencer C.C.A."/>
            <person name="Jones M.C."/>
            <person name="Gillson C."/>
            <person name="Searle S."/>
            <person name="Zhou Y."/>
            <person name="Kokocinski F."/>
            <person name="McDonald L."/>
            <person name="Evans R."/>
            <person name="Phillips K."/>
            <person name="Atkinson A."/>
            <person name="Cooper R."/>
            <person name="Jones C."/>
            <person name="Hall R.E."/>
            <person name="Andrews T.D."/>
            <person name="Lloyd C."/>
            <person name="Ainscough R."/>
            <person name="Almeida J.P."/>
            <person name="Ambrose K.D."/>
            <person name="Anderson F."/>
            <person name="Andrew R.W."/>
            <person name="Ashwell R.I.S."/>
            <person name="Aubin K."/>
            <person name="Babbage A.K."/>
            <person name="Bagguley C.L."/>
            <person name="Bailey J."/>
            <person name="Beasley H."/>
            <person name="Bethel G."/>
            <person name="Bird C.P."/>
            <person name="Bray-Allen S."/>
            <person name="Brown J.Y."/>
            <person name="Brown A.J."/>
            <person name="Buckley D."/>
            <person name="Burton J."/>
            <person name="Bye J."/>
            <person name="Carder C."/>
            <person name="Chapman J.C."/>
            <person name="Clark S.Y."/>
            <person name="Clarke G."/>
            <person name="Clee C."/>
            <person name="Cobley V."/>
            <person name="Collier R.E."/>
            <person name="Corby N."/>
            <person name="Coville G.J."/>
            <person name="Davies J."/>
            <person name="Deadman R."/>
            <person name="Dunn M."/>
            <person name="Earthrowl M."/>
            <person name="Ellington A.G."/>
            <person name="Errington H."/>
            <person name="Frankish A."/>
            <person name="Frankland J."/>
            <person name="French L."/>
            <person name="Garner P."/>
            <person name="Garnett J."/>
            <person name="Gay L."/>
            <person name="Ghori M.R.J."/>
            <person name="Gibson R."/>
            <person name="Gilby L.M."/>
            <person name="Gillett W."/>
            <person name="Glithero R.J."/>
            <person name="Grafham D.V."/>
            <person name="Griffiths C."/>
            <person name="Griffiths-Jones S."/>
            <person name="Grocock R."/>
            <person name="Hammond S."/>
            <person name="Harrison E.S.I."/>
            <person name="Hart E."/>
            <person name="Haugen E."/>
            <person name="Heath P.D."/>
            <person name="Holmes S."/>
            <person name="Holt K."/>
            <person name="Howden P.J."/>
            <person name="Hunt A.R."/>
            <person name="Hunt S.E."/>
            <person name="Hunter G."/>
            <person name="Isherwood J."/>
            <person name="James R."/>
            <person name="Johnson C."/>
            <person name="Johnson D."/>
            <person name="Joy A."/>
            <person name="Kay M."/>
            <person name="Kershaw J.K."/>
            <person name="Kibukawa M."/>
            <person name="Kimberley A.M."/>
            <person name="King A."/>
            <person name="Knights A.J."/>
            <person name="Lad H."/>
            <person name="Laird G."/>
            <person name="Lawlor S."/>
            <person name="Leongamornlert D.A."/>
            <person name="Lloyd D.M."/>
            <person name="Loveland J."/>
            <person name="Lovell J."/>
            <person name="Lush M.J."/>
            <person name="Lyne R."/>
            <person name="Martin S."/>
            <person name="Mashreghi-Mohammadi M."/>
            <person name="Matthews L."/>
            <person name="Matthews N.S.W."/>
            <person name="McLaren S."/>
            <person name="Milne S."/>
            <person name="Mistry S."/>
            <person name="Moore M.J.F."/>
            <person name="Nickerson T."/>
            <person name="O'Dell C.N."/>
            <person name="Oliver K."/>
            <person name="Palmeiri A."/>
            <person name="Palmer S.A."/>
            <person name="Parker A."/>
            <person name="Patel D."/>
            <person name="Pearce A.V."/>
            <person name="Peck A.I."/>
            <person name="Pelan S."/>
            <person name="Phelps K."/>
            <person name="Phillimore B.J."/>
            <person name="Plumb R."/>
            <person name="Rajan J."/>
            <person name="Raymond C."/>
            <person name="Rouse G."/>
            <person name="Saenphimmachak C."/>
            <person name="Sehra H.K."/>
            <person name="Sheridan E."/>
            <person name="Shownkeen R."/>
            <person name="Sims S."/>
            <person name="Skuce C.D."/>
            <person name="Smith M."/>
            <person name="Steward C."/>
            <person name="Subramanian S."/>
            <person name="Sycamore N."/>
            <person name="Tracey A."/>
            <person name="Tromans A."/>
            <person name="Van Helmond Z."/>
            <person name="Wall M."/>
            <person name="Wallis J.M."/>
            <person name="White S."/>
            <person name="Whitehead S.L."/>
            <person name="Wilkinson J.E."/>
            <person name="Willey D.L."/>
            <person name="Williams H."/>
            <person name="Wilming L."/>
            <person name="Wray P.W."/>
            <person name="Wu Z."/>
            <person name="Coulson A."/>
            <person name="Vaudin M."/>
            <person name="Sulston J.E."/>
            <person name="Durbin R.M."/>
            <person name="Hubbard T."/>
            <person name="Wooster R."/>
            <person name="Dunham I."/>
            <person name="Carter N.P."/>
            <person name="McVean G."/>
            <person name="Ross M.T."/>
            <person name="Harrow J."/>
            <person name="Olson M.V."/>
            <person name="Beck S."/>
            <person name="Rogers J."/>
            <person name="Bentley D.R."/>
        </authorList>
    </citation>
    <scope>NUCLEOTIDE SEQUENCE [LARGE SCALE GENOMIC DNA]</scope>
</reference>
<reference key="4">
    <citation type="journal article" date="2004" name="Genome Res.">
        <title>The status, quality, and expansion of the NIH full-length cDNA project: the Mammalian Gene Collection (MGC).</title>
        <authorList>
            <consortium name="The MGC Project Team"/>
        </authorList>
    </citation>
    <scope>NUCLEOTIDE SEQUENCE [LARGE SCALE MRNA] (ISOFORMS 6 AND 7)</scope>
    <scope>VARIANT PRO-310</scope>
    <source>
        <tissue>Bone marrow</tissue>
        <tissue>Skin</tissue>
    </source>
</reference>
<reference key="5">
    <citation type="journal article" date="2006" name="Science">
        <title>A genome-wide association study identifies IL23R as an inflammatory bowel disease gene.</title>
        <authorList>
            <person name="Duerr R.H."/>
            <person name="Taylor K.D."/>
            <person name="Brant S.R."/>
            <person name="Rioux J.D."/>
            <person name="Silverberg M.S."/>
            <person name="Daly M.J."/>
            <person name="Steinhart A.H."/>
            <person name="Abraham C."/>
            <person name="Regueiro M."/>
            <person name="Griffiths A."/>
            <person name="Dassopoulos T."/>
            <person name="Bitton A."/>
            <person name="Yang H."/>
            <person name="Targan S."/>
            <person name="Datta L.W."/>
            <person name="Kistner E.O."/>
            <person name="Schumm L.P."/>
            <person name="Lee A.T."/>
            <person name="Gregersen P.K."/>
            <person name="Barmada M.M."/>
            <person name="Rotter J.I."/>
            <person name="Nicolae D.L."/>
            <person name="Cho J.H."/>
        </authorList>
    </citation>
    <scope>INVOLVEMENT IN IBD17</scope>
    <scope>VARIANTS HIS-3; PRO-310 AND GLN-381</scope>
    <scope>CHARACTERIZATION OF VARIANT GLN-381</scope>
</reference>
<reference key="6">
    <citation type="journal article" date="2007" name="Hum. Genet.">
        <title>Sequence variants in the genes for the interleukin-23 receptor (IL23R) and its ligand (IL12B) confer protection against psoriasis.</title>
        <authorList>
            <person name="Capon F."/>
            <person name="Di Meglio P."/>
            <person name="Szaub J."/>
            <person name="Prescott N.J."/>
            <person name="Dunster C."/>
            <person name="Baumber L."/>
            <person name="Timms K."/>
            <person name="Gutin A."/>
            <person name="Abkevic V."/>
            <person name="Burden A.D."/>
            <person name="Lanchbury J."/>
            <person name="Barker J.N."/>
            <person name="Trembath R.C."/>
            <person name="Nestle F.O."/>
        </authorList>
    </citation>
    <scope>VARIANT GLN-381</scope>
    <scope>CHARACTERIZATION OF VARIANT GLN-381</scope>
</reference>
<reference key="7">
    <citation type="journal article" date="2007" name="Proc. Natl. Acad. Sci. U.S.A.">
        <title>Genome-wide association study for Crohn's disease in the Quebec founder population identifies multiple validated disease loci.</title>
        <authorList>
            <person name="Raelson J.V."/>
            <person name="Little R.D."/>
            <person name="Ruether A."/>
            <person name="Fournier H."/>
            <person name="Paquin B."/>
            <person name="Van Eerdewegh P."/>
            <person name="Bradley W.E.C."/>
            <person name="Croteau P."/>
            <person name="Nguyen-Huu Q."/>
            <person name="Segal J."/>
            <person name="Debrus S."/>
            <person name="Allard R."/>
            <person name="Rosenstiel P."/>
            <person name="Franke A."/>
            <person name="Jacobs G."/>
            <person name="Nikolaus S."/>
            <person name="Vidal J.-M."/>
            <person name="Szego P."/>
            <person name="Laplante N."/>
            <person name="Clark H.F."/>
            <person name="Paulussen R.J."/>
            <person name="Hooper J.W."/>
            <person name="Keith T.P."/>
            <person name="Belouchi A."/>
            <person name="Schreiber S."/>
        </authorList>
    </citation>
    <scope>INVOLVEMENT IN IBD17</scope>
    <scope>VARIANT GLN-381</scope>
</reference>
<reference key="8">
    <citation type="journal article" date="2009" name="J. Invest. Dermatol.">
        <title>Genetic variants of the IL-23R pathway: association with psoriatic arthritis and psoriasis vulgaris, but no specific risk factor for arthritis.</title>
        <authorList>
            <person name="Huffmeier U."/>
            <person name="Lascorz J."/>
            <person name="Bohm B."/>
            <person name="Lohmann J."/>
            <person name="Wendler J."/>
            <person name="Mossner R."/>
            <person name="Reich K."/>
            <person name="Traupe H."/>
            <person name="Kurrat W."/>
            <person name="Burkhardt H."/>
            <person name="Reis A."/>
        </authorList>
    </citation>
    <scope>VARIANTS PRO-310 AND GLN-381</scope>
    <scope>CHARACTERIZATION OF VARIANT GLN-381</scope>
</reference>
<reference key="9">
    <citation type="journal article" date="2010" name="J. Mass Spectrom.">
        <title>Glycosylation analysis of interleukin-23 receptor: elucidation of glycosylation sites and characterization of attached glycan structures.</title>
        <authorList>
            <person name="Zhao J."/>
            <person name="Liu Y.H."/>
            <person name="Reichert P."/>
            <person name="Pflanz S."/>
            <person name="Pramanik B."/>
        </authorList>
    </citation>
    <scope>GLYCOSYLATION AT ASN-29; ASN-47; ASN-81; ASN-141; ASN-180; ASN-232; ASN-262 AND ASN-273</scope>
</reference>
<comment type="function">
    <text evidence="3">Associates with IL12RB1 to form the interleukin-23 receptor. Binds IL23 and mediates T-cells, NK cells and possibly certain macrophage/myeloid cells stimulation probably through activation of the Jak-Stat signaling cascade. IL23 functions in innate and adaptive immunity and may participate in acute response to infection in peripheral tissues. IL23 may be responsible for autoimmune inflammatory diseases and be important for tumorigenesis.</text>
</comment>
<comment type="subunit">
    <text evidence="3">Heterodimer with IL12RB1. In presence of IL23, the heterodimer forms the IL23 receptor. Interacts with JAK2 and in presence of IL23 with STAT3.</text>
</comment>
<comment type="interaction">
    <interactant intactId="EBI-10248005">
        <id>Q5VWK5</id>
    </interactant>
    <interactant intactId="EBI-3844053">
        <id>Q13901</id>
        <label>C1D</label>
    </interactant>
    <organismsDiffer>false</organismsDiffer>
    <experiments>3</experiments>
</comment>
<comment type="interaction">
    <interactant intactId="EBI-10248005">
        <id>Q5VWK5</id>
    </interactant>
    <interactant intactId="EBI-2481154">
        <id>Q9NPF7</id>
        <label>IL23A</label>
    </interactant>
    <organismsDiffer>false</organismsDiffer>
    <experiments>2</experiments>
</comment>
<comment type="interaction">
    <interactant intactId="EBI-10248005">
        <id>Q5VWK5</id>
    </interactant>
    <interactant intactId="EBI-646604">
        <id>Q62120</id>
        <label>Jak2</label>
    </interactant>
    <organismsDiffer>true</organismsDiffer>
    <experiments>2</experiments>
</comment>
<comment type="subcellular location">
    <subcellularLocation>
        <location evidence="3">Cell membrane</location>
        <topology evidence="3">Single-pass type I membrane protein</topology>
    </subcellularLocation>
</comment>
<comment type="alternative products">
    <event type="alternative splicing"/>
    <isoform>
        <id>Q5VWK5-1</id>
        <name>1</name>
        <name>IL-23R1</name>
        <sequence type="displayed"/>
    </isoform>
    <isoform>
        <id>Q5VWK5-2</id>
        <name>2</name>
        <name>IL-23R2-F2</name>
        <sequence type="described" ref="VSP_021993"/>
    </isoform>
    <isoform>
        <id>Q5VWK5-3</id>
        <name>3</name>
        <name>IL-23R3-F1</name>
        <sequence type="described" ref="VSP_021997 VSP_021998"/>
    </isoform>
    <isoform>
        <id>Q5VWK5-4</id>
        <name>4</name>
        <name>IL-23R2-F1</name>
        <sequence type="described" ref="VSP_021994 VSP_021995"/>
    </isoform>
    <isoform>
        <id>Q5VWK5-5</id>
        <name>5</name>
        <name>IL-23R3-F3</name>
        <sequence type="described" ref="VSP_021991 VSP_021999"/>
    </isoform>
    <isoform>
        <id>Q5VWK5-6</id>
        <name>6</name>
        <name>IL-23R6</name>
        <sequence type="described" ref="VSP_021992 VSP_021996"/>
    </isoform>
    <isoform>
        <id>Q5VWK5-7</id>
        <name>7</name>
        <name>IL-23R5</name>
        <sequence type="described" ref="VSP_021990"/>
    </isoform>
</comment>
<comment type="tissue specificity">
    <text evidence="3 5">Expressed by monocytes, Th1, Th0, NK and dendritic cells. Isoform 1 is specifically expressed in NK cells.</text>
</comment>
<comment type="PTM">
    <text evidence="3">Phosphorylated in response to IL23.</text>
</comment>
<comment type="disease" evidence="6 8">
    <disease id="DI-02655">
        <name>Inflammatory bowel disease 17</name>
        <acronym>IBD17</acronym>
        <description>A chronic, relapsing inflammation of the gastrointestinal tract with a complex etiology. It is subdivided into Crohn disease and ulcerative colitis phenotypes. Crohn disease may affect any part of the gastrointestinal tract from the mouth to the anus, but most frequently it involves the terminal ileum and colon. Bowel inflammation is transmural and discontinuous; it may contain granulomas or be associated with intestinal or perianal fistulas. In contrast, in ulcerative colitis, the inflammation is continuous and limited to rectal and colonic mucosal layers; fistulas and granulomas are not observed. Both diseases include extraintestinal inflammation of the skin, eyes, or joints.</description>
        <dbReference type="MIM" id="612261"/>
    </disease>
    <text>Disease susceptibility is associated with variants affecting the gene represented in this entry.</text>
</comment>
<comment type="miscellaneous">
    <molecule>Isoform 2</molecule>
    <text evidence="13">Produced by translation in an alternate frame of the cDNA encoding isoform 4.</text>
</comment>
<comment type="miscellaneous">
    <molecule>Isoform 3</molecule>
    <text evidence="13">Produced by translation in an alternate frame of the cDNA encoding isoform 5.</text>
</comment>
<comment type="miscellaneous">
    <molecule>Isoform 4</molecule>
    <text evidence="13">Produced by translation in an alternate frame of the cDNA encoding isoform 2.</text>
</comment>
<comment type="miscellaneous">
    <molecule>Isoform 5</molecule>
    <text evidence="13">Produced by translation in an alternate frame of the cDNA encoding isoform 3.</text>
</comment>
<comment type="similarity">
    <text evidence="13">Belongs to the type I cytokine receptor family. Type 2 subfamily.</text>
</comment>
<comment type="sequence caution" evidence="13">
    <conflict type="erroneous initiation">
        <sequence resource="EMBL-CDS" id="AAH16829"/>
    </conflict>
    <text>Extended N-terminus.</text>
</comment>
<gene>
    <name type="primary">IL23R</name>
</gene>
<name>IL23R_HUMAN</name>
<sequence>MNQVTIQWDAVIALYILFSWCHGGITNINCSGHIWVEPATIFKMGMNISIYCQAAIKNCQPRKLHFYKNGIKERFQITRINKTTARLWYKNFLEPHASMYCTAECPKHFQETLICGKDISSGYPPDIPDEVTCVIYEYSGNMTCTWNAGKLTYIDTKYVVHVKSLETEEEQQYLTSSYINISTDSLQGGKKYLVWVQAANALGMEESKQLQIHLDDIVIPSAAVISRAETINATVPKTIIYWDSQTTIEKVSCEMRYKATTNQTWNVKEFDTNFTYVQQSEFYLEPNIKYVFQVRCQETGKRYWQPWSSLFFHKTPETVPQVTSKAFQHDTWNSGLTVASISTGHLTSDNRGDIGLLLGMIVFAVMLSILSLIGIFNRSFRTGIKRRILLLIPKWLYEDIPNMKNSNVVKMLQENSELMNNNSSEQVLYVDPMITEIKEIFIPEHKPTDYKKENTGPLETRDYPQNSLFDNTTVVYIPDLNTGYKPQISNFLPEGSHLSNNNEITSLTLKPPVDSLDSGNNPRLQKHPNFAFSVSSVNSLSNTIFLGELSLILNQGECSSPDIQNSVEEETTMLLENDSPSETIPEQTLLPDEFVSCLGIVNEELPSINTYFPQNILESHFNRISLLEK</sequence>
<keyword id="KW-0002">3D-structure</keyword>
<keyword id="KW-0025">Alternative splicing</keyword>
<keyword id="KW-1003">Cell membrane</keyword>
<keyword id="KW-0325">Glycoprotein</keyword>
<keyword id="KW-0391">Immunity</keyword>
<keyword id="KW-0395">Inflammatory response</keyword>
<keyword id="KW-0399">Innate immunity</keyword>
<keyword id="KW-0472">Membrane</keyword>
<keyword id="KW-0597">Phosphoprotein</keyword>
<keyword id="KW-1267">Proteomics identification</keyword>
<keyword id="KW-0675">Receptor</keyword>
<keyword id="KW-1185">Reference proteome</keyword>
<keyword id="KW-0677">Repeat</keyword>
<keyword id="KW-0732">Signal</keyword>
<keyword id="KW-0812">Transmembrane</keyword>
<keyword id="KW-1133">Transmembrane helix</keyword>
<dbReference type="EMBL" id="AF461422">
    <property type="protein sequence ID" value="AAM44229.1"/>
    <property type="molecule type" value="mRNA"/>
</dbReference>
<dbReference type="EMBL" id="AY937250">
    <property type="protein sequence ID" value="AAY18345.1"/>
    <property type="molecule type" value="mRNA"/>
</dbReference>
<dbReference type="EMBL" id="AY937251">
    <property type="protein sequence ID" value="AAY18346.1"/>
    <property type="molecule type" value="mRNA"/>
</dbReference>
<dbReference type="EMBL" id="AY937252">
    <property type="protein sequence ID" value="AAY18347.1"/>
    <property type="molecule type" value="mRNA"/>
</dbReference>
<dbReference type="EMBL" id="AY937253">
    <property type="protein sequence ID" value="AAY18348.1"/>
    <property type="molecule type" value="mRNA"/>
</dbReference>
<dbReference type="EMBL" id="AY937254">
    <property type="protein sequence ID" value="AAY18349.1"/>
    <property type="molecule type" value="mRNA"/>
</dbReference>
<dbReference type="EMBL" id="AY937255">
    <property type="protein sequence ID" value="AAY18350.1"/>
    <property type="molecule type" value="mRNA"/>
</dbReference>
<dbReference type="EMBL" id="AL109843">
    <property type="status" value="NOT_ANNOTATED_CDS"/>
    <property type="molecule type" value="Genomic_DNA"/>
</dbReference>
<dbReference type="EMBL" id="AL389925">
    <property type="status" value="NOT_ANNOTATED_CDS"/>
    <property type="molecule type" value="Genomic_DNA"/>
</dbReference>
<dbReference type="EMBL" id="BC016829">
    <property type="protein sequence ID" value="AAH16829.1"/>
    <property type="status" value="ALT_INIT"/>
    <property type="molecule type" value="mRNA"/>
</dbReference>
<dbReference type="EMBL" id="BC040720">
    <property type="protein sequence ID" value="AAH40720.1"/>
    <property type="molecule type" value="mRNA"/>
</dbReference>
<dbReference type="CCDS" id="CCDS637.1">
    <molecule id="Q5VWK5-1"/>
</dbReference>
<dbReference type="RefSeq" id="NP_653302.2">
    <molecule id="Q5VWK5-1"/>
    <property type="nucleotide sequence ID" value="NM_144701.2"/>
</dbReference>
<dbReference type="RefSeq" id="XP_005270573.1">
    <property type="nucleotide sequence ID" value="XM_005270516.2"/>
</dbReference>
<dbReference type="RefSeq" id="XP_011539092.1">
    <molecule id="Q5VWK5-1"/>
    <property type="nucleotide sequence ID" value="XM_011540790.4"/>
</dbReference>
<dbReference type="RefSeq" id="XP_011539093.1">
    <molecule id="Q5VWK5-1"/>
    <property type="nucleotide sequence ID" value="XM_011540791.4"/>
</dbReference>
<dbReference type="RefSeq" id="XP_054190613.1">
    <molecule id="Q5VWK5-1"/>
    <property type="nucleotide sequence ID" value="XM_054334638.1"/>
</dbReference>
<dbReference type="RefSeq" id="XP_054190614.1">
    <molecule id="Q5VWK5-1"/>
    <property type="nucleotide sequence ID" value="XM_054334639.1"/>
</dbReference>
<dbReference type="PDB" id="5MZV">
    <property type="method" value="X-ray"/>
    <property type="resolution" value="2.80 A"/>
    <property type="chains" value="C=1-317"/>
</dbReference>
<dbReference type="PDB" id="6WDQ">
    <property type="method" value="X-ray"/>
    <property type="resolution" value="3.40 A"/>
    <property type="chains" value="C=24-317"/>
</dbReference>
<dbReference type="PDB" id="8OE4">
    <property type="method" value="EM"/>
    <property type="resolution" value="3.60 A"/>
    <property type="chains" value="C=24-353"/>
</dbReference>
<dbReference type="PDBsum" id="5MZV"/>
<dbReference type="PDBsum" id="6WDQ"/>
<dbReference type="PDBsum" id="8OE4"/>
<dbReference type="EMDB" id="EMD-21646"/>
<dbReference type="SMR" id="Q5VWK5"/>
<dbReference type="BioGRID" id="127199">
    <property type="interactions" value="14"/>
</dbReference>
<dbReference type="ComplexPortal" id="CPX-383">
    <property type="entry name" value="Interleukin-23 receptor-ligand complex"/>
</dbReference>
<dbReference type="CORUM" id="Q5VWK5"/>
<dbReference type="FunCoup" id="Q5VWK5">
    <property type="interactions" value="389"/>
</dbReference>
<dbReference type="IntAct" id="Q5VWK5">
    <property type="interactions" value="10"/>
</dbReference>
<dbReference type="STRING" id="9606.ENSP00000321345"/>
<dbReference type="BindingDB" id="Q5VWK5"/>
<dbReference type="ChEMBL" id="CHEMBL4296013"/>
<dbReference type="GlyCosmos" id="Q5VWK5">
    <property type="glycosylation" value="8 sites, No reported glycans"/>
</dbReference>
<dbReference type="GlyGen" id="Q5VWK5">
    <property type="glycosylation" value="9 sites"/>
</dbReference>
<dbReference type="iPTMnet" id="Q5VWK5"/>
<dbReference type="PhosphoSitePlus" id="Q5VWK5"/>
<dbReference type="BioMuta" id="IL23R"/>
<dbReference type="DMDM" id="311033431"/>
<dbReference type="jPOST" id="Q5VWK5"/>
<dbReference type="MassIVE" id="Q5VWK5"/>
<dbReference type="PaxDb" id="9606-ENSP00000321345"/>
<dbReference type="PeptideAtlas" id="Q5VWK5"/>
<dbReference type="ProteomicsDB" id="65533">
    <molecule id="Q5VWK5-1"/>
</dbReference>
<dbReference type="ProteomicsDB" id="65535">
    <molecule id="Q5VWK5-3"/>
</dbReference>
<dbReference type="ProteomicsDB" id="65536">
    <molecule id="Q5VWK5-4"/>
</dbReference>
<dbReference type="ProteomicsDB" id="65539">
    <molecule id="Q5VWK5-7"/>
</dbReference>
<dbReference type="ABCD" id="Q5VWK5">
    <property type="antibodies" value="3 sequenced antibodies"/>
</dbReference>
<dbReference type="Antibodypedia" id="33405">
    <property type="antibodies" value="546 antibodies from 34 providers"/>
</dbReference>
<dbReference type="DNASU" id="149233"/>
<dbReference type="Ensembl" id="ENST00000347310.10">
    <molecule id="Q5VWK5-1"/>
    <property type="protein sequence ID" value="ENSP00000321345.5"/>
    <property type="gene ID" value="ENSG00000162594.17"/>
</dbReference>
<dbReference type="Ensembl" id="ENST00000425614.3">
    <molecule id="Q5VWK5-6"/>
    <property type="protein sequence ID" value="ENSP00000387640.2"/>
    <property type="gene ID" value="ENSG00000162594.17"/>
</dbReference>
<dbReference type="Ensembl" id="ENST00000697149.1">
    <molecule id="Q5VWK5-4"/>
    <property type="protein sequence ID" value="ENSP00000513138.1"/>
    <property type="gene ID" value="ENSG00000162594.17"/>
</dbReference>
<dbReference type="Ensembl" id="ENST00000697150.1">
    <molecule id="Q5VWK5-3"/>
    <property type="protein sequence ID" value="ENSP00000513139.1"/>
    <property type="gene ID" value="ENSG00000162594.17"/>
</dbReference>
<dbReference type="Ensembl" id="ENST00000697151.1">
    <molecule id="Q5VWK5-3"/>
    <property type="protein sequence ID" value="ENSP00000513140.1"/>
    <property type="gene ID" value="ENSG00000162594.17"/>
</dbReference>
<dbReference type="Ensembl" id="ENST00000697153.1">
    <molecule id="Q5VWK5-4"/>
    <property type="protein sequence ID" value="ENSP00000513142.1"/>
    <property type="gene ID" value="ENSG00000162594.17"/>
</dbReference>
<dbReference type="Ensembl" id="ENST00000697223.1">
    <molecule id="Q5VWK5-4"/>
    <property type="protein sequence ID" value="ENSP00000513190.1"/>
    <property type="gene ID" value="ENSG00000162594.17"/>
</dbReference>
<dbReference type="Ensembl" id="ENST00000697224.1">
    <molecule id="Q5VWK5-4"/>
    <property type="protein sequence ID" value="ENSP00000513191.1"/>
    <property type="gene ID" value="ENSG00000162594.17"/>
</dbReference>
<dbReference type="GeneID" id="149233"/>
<dbReference type="KEGG" id="hsa:149233"/>
<dbReference type="MANE-Select" id="ENST00000347310.10">
    <property type="protein sequence ID" value="ENSP00000321345.5"/>
    <property type="RefSeq nucleotide sequence ID" value="NM_144701.3"/>
    <property type="RefSeq protein sequence ID" value="NP_653302.2"/>
</dbReference>
<dbReference type="UCSC" id="uc001ddo.4">
    <molecule id="Q5VWK5-1"/>
    <property type="organism name" value="human"/>
</dbReference>
<dbReference type="AGR" id="HGNC:19100"/>
<dbReference type="CTD" id="149233"/>
<dbReference type="DisGeNET" id="149233"/>
<dbReference type="GeneCards" id="IL23R"/>
<dbReference type="HGNC" id="HGNC:19100">
    <property type="gene designation" value="IL23R"/>
</dbReference>
<dbReference type="HPA" id="ENSG00000162594">
    <property type="expression patterns" value="Tissue enhanced (adrenal gland, intestine, testis)"/>
</dbReference>
<dbReference type="MalaCards" id="IL23R"/>
<dbReference type="MIM" id="607562">
    <property type="type" value="gene"/>
</dbReference>
<dbReference type="MIM" id="612261">
    <property type="type" value="phenotype"/>
</dbReference>
<dbReference type="neXtProt" id="NX_Q5VWK5"/>
<dbReference type="OpenTargets" id="ENSG00000162594"/>
<dbReference type="Orphanet" id="117">
    <property type="disease" value="Behcet disease"/>
</dbReference>
<dbReference type="PharmGKB" id="PA134935109"/>
<dbReference type="VEuPathDB" id="HostDB:ENSG00000162594"/>
<dbReference type="eggNOG" id="ENOG502QUIH">
    <property type="taxonomic scope" value="Eukaryota"/>
</dbReference>
<dbReference type="GeneTree" id="ENSGT00530000064198"/>
<dbReference type="HOGENOM" id="CLU_029854_0_0_1"/>
<dbReference type="InParanoid" id="Q5VWK5"/>
<dbReference type="OMA" id="NWCHGGI"/>
<dbReference type="OrthoDB" id="9897281at2759"/>
<dbReference type="PAN-GO" id="Q5VWK5">
    <property type="GO annotations" value="7 GO annotations based on evolutionary models"/>
</dbReference>
<dbReference type="PhylomeDB" id="Q5VWK5"/>
<dbReference type="TreeFam" id="TF335930"/>
<dbReference type="PathwayCommons" id="Q5VWK5"/>
<dbReference type="Reactome" id="R-HSA-6785807">
    <property type="pathway name" value="Interleukin-4 and Interleukin-13 signaling"/>
</dbReference>
<dbReference type="Reactome" id="R-HSA-9020933">
    <property type="pathway name" value="Interleukin-23 signaling"/>
</dbReference>
<dbReference type="SignaLink" id="Q5VWK5"/>
<dbReference type="SIGNOR" id="Q5VWK5"/>
<dbReference type="BioGRID-ORCS" id="149233">
    <property type="hits" value="12 hits in 1147 CRISPR screens"/>
</dbReference>
<dbReference type="ChiTaRS" id="IL23R">
    <property type="organism name" value="human"/>
</dbReference>
<dbReference type="GeneWiki" id="Interleukin-23_receptor"/>
<dbReference type="GenomeRNAi" id="149233"/>
<dbReference type="Pharos" id="Q5VWK5">
    <property type="development level" value="Tchem"/>
</dbReference>
<dbReference type="PRO" id="PR:Q5VWK5"/>
<dbReference type="Proteomes" id="UP000005640">
    <property type="component" value="Chromosome 1"/>
</dbReference>
<dbReference type="RNAct" id="Q5VWK5">
    <property type="molecule type" value="protein"/>
</dbReference>
<dbReference type="Bgee" id="ENSG00000162594">
    <property type="expression patterns" value="Expressed in secondary oocyte and 25 other cell types or tissues"/>
</dbReference>
<dbReference type="ExpressionAtlas" id="Q5VWK5">
    <property type="expression patterns" value="baseline and differential"/>
</dbReference>
<dbReference type="GO" id="GO:0009986">
    <property type="term" value="C:cell surface"/>
    <property type="evidence" value="ECO:0000314"/>
    <property type="project" value="UniProt"/>
</dbReference>
<dbReference type="GO" id="GO:0009897">
    <property type="term" value="C:external side of plasma membrane"/>
    <property type="evidence" value="ECO:0000318"/>
    <property type="project" value="GO_Central"/>
</dbReference>
<dbReference type="GO" id="GO:0072536">
    <property type="term" value="C:interleukin-23 receptor complex"/>
    <property type="evidence" value="ECO:0000314"/>
    <property type="project" value="BHF-UCL"/>
</dbReference>
<dbReference type="GO" id="GO:0005886">
    <property type="term" value="C:plasma membrane"/>
    <property type="evidence" value="ECO:0000304"/>
    <property type="project" value="Reactome"/>
</dbReference>
<dbReference type="GO" id="GO:0043235">
    <property type="term" value="C:receptor complex"/>
    <property type="evidence" value="ECO:0000314"/>
    <property type="project" value="MGI"/>
</dbReference>
<dbReference type="GO" id="GO:0019955">
    <property type="term" value="F:cytokine binding"/>
    <property type="evidence" value="ECO:0000318"/>
    <property type="project" value="GO_Central"/>
</dbReference>
<dbReference type="GO" id="GO:0004896">
    <property type="term" value="F:cytokine receptor activity"/>
    <property type="evidence" value="ECO:0000314"/>
    <property type="project" value="UniProt"/>
</dbReference>
<dbReference type="GO" id="GO:0017046">
    <property type="term" value="F:peptide hormone binding"/>
    <property type="evidence" value="ECO:0000318"/>
    <property type="project" value="GO_Central"/>
</dbReference>
<dbReference type="GO" id="GO:0004925">
    <property type="term" value="F:prolactin receptor activity"/>
    <property type="evidence" value="ECO:0000318"/>
    <property type="project" value="GO_Central"/>
</dbReference>
<dbReference type="GO" id="GO:0007259">
    <property type="term" value="P:cell surface receptor signaling pathway via JAK-STAT"/>
    <property type="evidence" value="ECO:0000305"/>
    <property type="project" value="BHF-UCL"/>
</dbReference>
<dbReference type="GO" id="GO:0097696">
    <property type="term" value="P:cell surface receptor signaling pathway via STAT"/>
    <property type="evidence" value="ECO:0000304"/>
    <property type="project" value="BHF-UCL"/>
</dbReference>
<dbReference type="GO" id="GO:0019221">
    <property type="term" value="P:cytokine-mediated signaling pathway"/>
    <property type="evidence" value="ECO:0000318"/>
    <property type="project" value="GO_Central"/>
</dbReference>
<dbReference type="GO" id="GO:0050829">
    <property type="term" value="P:defense response to Gram-negative bacterium"/>
    <property type="evidence" value="ECO:0000305"/>
    <property type="project" value="BHF-UCL"/>
</dbReference>
<dbReference type="GO" id="GO:0006954">
    <property type="term" value="P:inflammatory response"/>
    <property type="evidence" value="ECO:0007669"/>
    <property type="project" value="UniProtKB-KW"/>
</dbReference>
<dbReference type="GO" id="GO:0038155">
    <property type="term" value="P:interleukin-23-mediated signaling pathway"/>
    <property type="evidence" value="ECO:0000314"/>
    <property type="project" value="UniProt"/>
</dbReference>
<dbReference type="GO" id="GO:0032693">
    <property type="term" value="P:negative regulation of interleukin-10 production"/>
    <property type="evidence" value="ECO:0000315"/>
    <property type="project" value="BHF-UCL"/>
</dbReference>
<dbReference type="GO" id="GO:0042104">
    <property type="term" value="P:positive regulation of activated T cell proliferation"/>
    <property type="evidence" value="ECO:0000305"/>
    <property type="project" value="BHF-UCL"/>
</dbReference>
<dbReference type="GO" id="GO:0008284">
    <property type="term" value="P:positive regulation of cell population proliferation"/>
    <property type="evidence" value="ECO:0000318"/>
    <property type="project" value="GO_Central"/>
</dbReference>
<dbReference type="GO" id="GO:0002230">
    <property type="term" value="P:positive regulation of defense response to virus by host"/>
    <property type="evidence" value="ECO:0000314"/>
    <property type="project" value="BHF-UCL"/>
</dbReference>
<dbReference type="GO" id="GO:0032725">
    <property type="term" value="P:positive regulation of granulocyte macrophage colony-stimulating factor production"/>
    <property type="evidence" value="ECO:0000305"/>
    <property type="project" value="BHF-UCL"/>
</dbReference>
<dbReference type="GO" id="GO:0032735">
    <property type="term" value="P:positive regulation of interleukin-12 production"/>
    <property type="evidence" value="ECO:0000314"/>
    <property type="project" value="BHF-UCL"/>
</dbReference>
<dbReference type="GO" id="GO:0032740">
    <property type="term" value="P:positive regulation of interleukin-17 production"/>
    <property type="evidence" value="ECO:0000305"/>
    <property type="project" value="BHF-UCL"/>
</dbReference>
<dbReference type="GO" id="GO:0043382">
    <property type="term" value="P:positive regulation of memory T cell differentiation"/>
    <property type="evidence" value="ECO:0000250"/>
    <property type="project" value="BHF-UCL"/>
</dbReference>
<dbReference type="GO" id="GO:0032819">
    <property type="term" value="P:positive regulation of natural killer cell proliferation"/>
    <property type="evidence" value="ECO:0000304"/>
    <property type="project" value="BHF-UCL"/>
</dbReference>
<dbReference type="GO" id="GO:0051135">
    <property type="term" value="P:positive regulation of NK T cell activation"/>
    <property type="evidence" value="ECO:0000304"/>
    <property type="project" value="BHF-UCL"/>
</dbReference>
<dbReference type="GO" id="GO:0045672">
    <property type="term" value="P:positive regulation of osteoclast differentiation"/>
    <property type="evidence" value="ECO:0000305"/>
    <property type="project" value="BHF-UCL"/>
</dbReference>
<dbReference type="GO" id="GO:0001916">
    <property type="term" value="P:positive regulation of T cell mediated cytotoxicity"/>
    <property type="evidence" value="ECO:0000250"/>
    <property type="project" value="BHF-UCL"/>
</dbReference>
<dbReference type="GO" id="GO:0042102">
    <property type="term" value="P:positive regulation of T cell proliferation"/>
    <property type="evidence" value="ECO:0000305"/>
    <property type="project" value="BHF-UCL"/>
</dbReference>
<dbReference type="GO" id="GO:0002827">
    <property type="term" value="P:positive regulation of T-helper 1 type immune response"/>
    <property type="evidence" value="ECO:0000314"/>
    <property type="project" value="BHF-UCL"/>
</dbReference>
<dbReference type="GO" id="GO:2000330">
    <property type="term" value="P:positive regulation of T-helper 17 cell lineage commitment"/>
    <property type="evidence" value="ECO:0000250"/>
    <property type="project" value="BHF-UCL"/>
</dbReference>
<dbReference type="GO" id="GO:2000318">
    <property type="term" value="P:positive regulation of T-helper 17 type immune response"/>
    <property type="evidence" value="ECO:0000250"/>
    <property type="project" value="BHF-UCL"/>
</dbReference>
<dbReference type="GO" id="GO:0032729">
    <property type="term" value="P:positive regulation of type II interferon production"/>
    <property type="evidence" value="ECO:0000314"/>
    <property type="project" value="BHF-UCL"/>
</dbReference>
<dbReference type="GO" id="GO:0032496">
    <property type="term" value="P:response to lipopolysaccharide"/>
    <property type="evidence" value="ECO:0000314"/>
    <property type="project" value="BHF-UCL"/>
</dbReference>
<dbReference type="GO" id="GO:0034341">
    <property type="term" value="P:response to type II interferon"/>
    <property type="evidence" value="ECO:0000314"/>
    <property type="project" value="BHF-UCL"/>
</dbReference>
<dbReference type="FunFam" id="2.60.40.10:FF:001364">
    <property type="entry name" value="Interleukin 23 receptor"/>
    <property type="match status" value="1"/>
</dbReference>
<dbReference type="FunFam" id="2.60.40.10:FF:001392">
    <property type="entry name" value="Interleukin 23 receptor"/>
    <property type="match status" value="1"/>
</dbReference>
<dbReference type="Gene3D" id="2.60.40.10">
    <property type="entry name" value="Immunoglobulins"/>
    <property type="match status" value="2"/>
</dbReference>
<dbReference type="InterPro" id="IPR003961">
    <property type="entry name" value="FN3_dom"/>
</dbReference>
<dbReference type="InterPro" id="IPR036116">
    <property type="entry name" value="FN3_sf"/>
</dbReference>
<dbReference type="InterPro" id="IPR013783">
    <property type="entry name" value="Ig-like_fold"/>
</dbReference>
<dbReference type="InterPro" id="IPR052672">
    <property type="entry name" value="Type1_Cytokine_Rcpt_Type2"/>
</dbReference>
<dbReference type="PANTHER" id="PTHR48423:SF2">
    <property type="entry name" value="INTERLEUKIN-12 RECEPTOR SUBUNIT BETA-2"/>
    <property type="match status" value="1"/>
</dbReference>
<dbReference type="PANTHER" id="PTHR48423">
    <property type="entry name" value="INTERLEUKIN-27 RECEPTOR SUBUNIT ALPHA"/>
    <property type="match status" value="1"/>
</dbReference>
<dbReference type="SUPFAM" id="SSF49265">
    <property type="entry name" value="Fibronectin type III"/>
    <property type="match status" value="2"/>
</dbReference>
<dbReference type="PROSITE" id="PS50853">
    <property type="entry name" value="FN3"/>
    <property type="match status" value="2"/>
</dbReference>
<organism>
    <name type="scientific">Homo sapiens</name>
    <name type="common">Human</name>
    <dbReference type="NCBI Taxonomy" id="9606"/>
    <lineage>
        <taxon>Eukaryota</taxon>
        <taxon>Metazoa</taxon>
        <taxon>Chordata</taxon>
        <taxon>Craniata</taxon>
        <taxon>Vertebrata</taxon>
        <taxon>Euteleostomi</taxon>
        <taxon>Mammalia</taxon>
        <taxon>Eutheria</taxon>
        <taxon>Euarchontoglires</taxon>
        <taxon>Primates</taxon>
        <taxon>Haplorrhini</taxon>
        <taxon>Catarrhini</taxon>
        <taxon>Hominidae</taxon>
        <taxon>Homo</taxon>
    </lineage>
</organism>
<accession>Q5VWK5</accession>
<accession>C9JGX4</accession>
<accession>Q4VGP1</accession>
<accession>Q4VGP2</accession>
<accession>Q4VGP3</accession>
<accession>Q4VGP4</accession>
<accession>Q4VGP5</accession>
<accession>Q4VGP6</accession>
<accession>Q5VWK7</accession>
<accession>Q8IW84</accession>
<accession>Q8NFQ9</accession>
<accession>Q96AS1</accession>
<protein>
    <recommendedName>
        <fullName>Interleukin-23 receptor</fullName>
        <shortName>IL-23 receptor</shortName>
        <shortName>IL-23R</shortName>
    </recommendedName>
</protein>